<reference key="1">
    <citation type="journal article" date="2001" name="Science">
        <title>Comparative genomics of Listeria species.</title>
        <authorList>
            <person name="Glaser P."/>
            <person name="Frangeul L."/>
            <person name="Buchrieser C."/>
            <person name="Rusniok C."/>
            <person name="Amend A."/>
            <person name="Baquero F."/>
            <person name="Berche P."/>
            <person name="Bloecker H."/>
            <person name="Brandt P."/>
            <person name="Chakraborty T."/>
            <person name="Charbit A."/>
            <person name="Chetouani F."/>
            <person name="Couve E."/>
            <person name="de Daruvar A."/>
            <person name="Dehoux P."/>
            <person name="Domann E."/>
            <person name="Dominguez-Bernal G."/>
            <person name="Duchaud E."/>
            <person name="Durant L."/>
            <person name="Dussurget O."/>
            <person name="Entian K.-D."/>
            <person name="Fsihi H."/>
            <person name="Garcia-del Portillo F."/>
            <person name="Garrido P."/>
            <person name="Gautier L."/>
            <person name="Goebel W."/>
            <person name="Gomez-Lopez N."/>
            <person name="Hain T."/>
            <person name="Hauf J."/>
            <person name="Jackson D."/>
            <person name="Jones L.-M."/>
            <person name="Kaerst U."/>
            <person name="Kreft J."/>
            <person name="Kuhn M."/>
            <person name="Kunst F."/>
            <person name="Kurapkat G."/>
            <person name="Madueno E."/>
            <person name="Maitournam A."/>
            <person name="Mata Vicente J."/>
            <person name="Ng E."/>
            <person name="Nedjari H."/>
            <person name="Nordsiek G."/>
            <person name="Novella S."/>
            <person name="de Pablos B."/>
            <person name="Perez-Diaz J.-C."/>
            <person name="Purcell R."/>
            <person name="Remmel B."/>
            <person name="Rose M."/>
            <person name="Schlueter T."/>
            <person name="Simoes N."/>
            <person name="Tierrez A."/>
            <person name="Vazquez-Boland J.-A."/>
            <person name="Voss H."/>
            <person name="Wehland J."/>
            <person name="Cossart P."/>
        </authorList>
    </citation>
    <scope>NUCLEOTIDE SEQUENCE [LARGE SCALE GENOMIC DNA]</scope>
    <source>
        <strain>ATCC BAA-679 / EGD-e</strain>
    </source>
</reference>
<organism>
    <name type="scientific">Listeria monocytogenes serovar 1/2a (strain ATCC BAA-679 / EGD-e)</name>
    <dbReference type="NCBI Taxonomy" id="169963"/>
    <lineage>
        <taxon>Bacteria</taxon>
        <taxon>Bacillati</taxon>
        <taxon>Bacillota</taxon>
        <taxon>Bacilli</taxon>
        <taxon>Bacillales</taxon>
        <taxon>Listeriaceae</taxon>
        <taxon>Listeria</taxon>
    </lineage>
</organism>
<name>RNPH_LISMO</name>
<accession>Q8Y7N6</accession>
<evidence type="ECO:0000255" key="1">
    <source>
        <dbReference type="HAMAP-Rule" id="MF_00564"/>
    </source>
</evidence>
<feature type="chain" id="PRO_0000139906" description="Ribonuclease PH">
    <location>
        <begin position="1"/>
        <end position="248"/>
    </location>
</feature>
<feature type="binding site" evidence="1">
    <location>
        <position position="86"/>
    </location>
    <ligand>
        <name>phosphate</name>
        <dbReference type="ChEBI" id="CHEBI:43474"/>
        <note>substrate</note>
    </ligand>
</feature>
<feature type="binding site" evidence="1">
    <location>
        <begin position="124"/>
        <end position="126"/>
    </location>
    <ligand>
        <name>phosphate</name>
        <dbReference type="ChEBI" id="CHEBI:43474"/>
        <note>substrate</note>
    </ligand>
</feature>
<comment type="function">
    <text evidence="1">Phosphorolytic 3'-5' exoribonuclease that plays an important role in tRNA 3'-end maturation. Removes nucleotide residues following the 3'-CCA terminus of tRNAs; can also add nucleotides to the ends of RNA molecules by using nucleoside diphosphates as substrates, but this may not be physiologically important. Probably plays a role in initiation of 16S rRNA degradation (leading to ribosome degradation) during starvation.</text>
</comment>
<comment type="catalytic activity">
    <reaction evidence="1">
        <text>tRNA(n+1) + phosphate = tRNA(n) + a ribonucleoside 5'-diphosphate</text>
        <dbReference type="Rhea" id="RHEA:10628"/>
        <dbReference type="Rhea" id="RHEA-COMP:17343"/>
        <dbReference type="Rhea" id="RHEA-COMP:17344"/>
        <dbReference type="ChEBI" id="CHEBI:43474"/>
        <dbReference type="ChEBI" id="CHEBI:57930"/>
        <dbReference type="ChEBI" id="CHEBI:173114"/>
        <dbReference type="EC" id="2.7.7.56"/>
    </reaction>
</comment>
<comment type="subunit">
    <text evidence="1">Homohexameric ring arranged as a trimer of dimers.</text>
</comment>
<comment type="similarity">
    <text evidence="1">Belongs to the RNase PH family.</text>
</comment>
<keyword id="KW-0548">Nucleotidyltransferase</keyword>
<keyword id="KW-1185">Reference proteome</keyword>
<keyword id="KW-0694">RNA-binding</keyword>
<keyword id="KW-0698">rRNA processing</keyword>
<keyword id="KW-0808">Transferase</keyword>
<keyword id="KW-0819">tRNA processing</keyword>
<keyword id="KW-0820">tRNA-binding</keyword>
<dbReference type="EC" id="2.7.7.56" evidence="1"/>
<dbReference type="EMBL" id="AL591978">
    <property type="protein sequence ID" value="CAC99316.1"/>
    <property type="molecule type" value="Genomic_DNA"/>
</dbReference>
<dbReference type="PIR" id="AF1229">
    <property type="entry name" value="AF1229"/>
</dbReference>
<dbReference type="RefSeq" id="NP_464763.1">
    <property type="nucleotide sequence ID" value="NC_003210.1"/>
</dbReference>
<dbReference type="RefSeq" id="WP_003726032.1">
    <property type="nucleotide sequence ID" value="NZ_CP149495.1"/>
</dbReference>
<dbReference type="SMR" id="Q8Y7N6"/>
<dbReference type="STRING" id="169963.gene:17593894"/>
<dbReference type="PaxDb" id="169963-lmo1238"/>
<dbReference type="EnsemblBacteria" id="CAC99316">
    <property type="protein sequence ID" value="CAC99316"/>
    <property type="gene ID" value="CAC99316"/>
</dbReference>
<dbReference type="GeneID" id="986029"/>
<dbReference type="KEGG" id="lmo:lmo1238"/>
<dbReference type="PATRIC" id="fig|169963.11.peg.1270"/>
<dbReference type="eggNOG" id="COG0689">
    <property type="taxonomic scope" value="Bacteria"/>
</dbReference>
<dbReference type="HOGENOM" id="CLU_050858_0_0_9"/>
<dbReference type="OrthoDB" id="9802265at2"/>
<dbReference type="PhylomeDB" id="Q8Y7N6"/>
<dbReference type="BioCyc" id="LMON169963:LMO1238-MONOMER"/>
<dbReference type="Proteomes" id="UP000000817">
    <property type="component" value="Chromosome"/>
</dbReference>
<dbReference type="GO" id="GO:0000175">
    <property type="term" value="F:3'-5'-RNA exonuclease activity"/>
    <property type="evidence" value="ECO:0007669"/>
    <property type="project" value="UniProtKB-UniRule"/>
</dbReference>
<dbReference type="GO" id="GO:0003723">
    <property type="term" value="F:RNA binding"/>
    <property type="evidence" value="ECO:0000318"/>
    <property type="project" value="GO_Central"/>
</dbReference>
<dbReference type="GO" id="GO:0000049">
    <property type="term" value="F:tRNA binding"/>
    <property type="evidence" value="ECO:0007669"/>
    <property type="project" value="UniProtKB-UniRule"/>
</dbReference>
<dbReference type="GO" id="GO:0009022">
    <property type="term" value="F:tRNA nucleotidyltransferase activity"/>
    <property type="evidence" value="ECO:0007669"/>
    <property type="project" value="UniProtKB-UniRule"/>
</dbReference>
<dbReference type="GO" id="GO:0016075">
    <property type="term" value="P:rRNA catabolic process"/>
    <property type="evidence" value="ECO:0000318"/>
    <property type="project" value="GO_Central"/>
</dbReference>
<dbReference type="GO" id="GO:0006364">
    <property type="term" value="P:rRNA processing"/>
    <property type="evidence" value="ECO:0007669"/>
    <property type="project" value="UniProtKB-KW"/>
</dbReference>
<dbReference type="GO" id="GO:0008033">
    <property type="term" value="P:tRNA processing"/>
    <property type="evidence" value="ECO:0007669"/>
    <property type="project" value="UniProtKB-UniRule"/>
</dbReference>
<dbReference type="CDD" id="cd11362">
    <property type="entry name" value="RNase_PH_bact"/>
    <property type="match status" value="1"/>
</dbReference>
<dbReference type="FunFam" id="3.30.230.70:FF:000003">
    <property type="entry name" value="Ribonuclease PH"/>
    <property type="match status" value="1"/>
</dbReference>
<dbReference type="Gene3D" id="3.30.230.70">
    <property type="entry name" value="GHMP Kinase, N-terminal domain"/>
    <property type="match status" value="1"/>
</dbReference>
<dbReference type="HAMAP" id="MF_00564">
    <property type="entry name" value="RNase_PH"/>
    <property type="match status" value="1"/>
</dbReference>
<dbReference type="InterPro" id="IPR001247">
    <property type="entry name" value="ExoRNase_PH_dom1"/>
</dbReference>
<dbReference type="InterPro" id="IPR015847">
    <property type="entry name" value="ExoRNase_PH_dom2"/>
</dbReference>
<dbReference type="InterPro" id="IPR036345">
    <property type="entry name" value="ExoRNase_PH_dom2_sf"/>
</dbReference>
<dbReference type="InterPro" id="IPR027408">
    <property type="entry name" value="PNPase/RNase_PH_dom_sf"/>
</dbReference>
<dbReference type="InterPro" id="IPR020568">
    <property type="entry name" value="Ribosomal_Su5_D2-typ_SF"/>
</dbReference>
<dbReference type="InterPro" id="IPR050080">
    <property type="entry name" value="RNase_PH"/>
</dbReference>
<dbReference type="InterPro" id="IPR002381">
    <property type="entry name" value="RNase_PH_bac-type"/>
</dbReference>
<dbReference type="InterPro" id="IPR018336">
    <property type="entry name" value="RNase_PH_CS"/>
</dbReference>
<dbReference type="NCBIfam" id="TIGR01966">
    <property type="entry name" value="RNasePH"/>
    <property type="match status" value="1"/>
</dbReference>
<dbReference type="PANTHER" id="PTHR11953">
    <property type="entry name" value="EXOSOME COMPLEX COMPONENT"/>
    <property type="match status" value="1"/>
</dbReference>
<dbReference type="PANTHER" id="PTHR11953:SF0">
    <property type="entry name" value="EXOSOME COMPLEX COMPONENT RRP41"/>
    <property type="match status" value="1"/>
</dbReference>
<dbReference type="Pfam" id="PF01138">
    <property type="entry name" value="RNase_PH"/>
    <property type="match status" value="1"/>
</dbReference>
<dbReference type="Pfam" id="PF03725">
    <property type="entry name" value="RNase_PH_C"/>
    <property type="match status" value="1"/>
</dbReference>
<dbReference type="SUPFAM" id="SSF55666">
    <property type="entry name" value="Ribonuclease PH domain 2-like"/>
    <property type="match status" value="1"/>
</dbReference>
<dbReference type="SUPFAM" id="SSF54211">
    <property type="entry name" value="Ribosomal protein S5 domain 2-like"/>
    <property type="match status" value="1"/>
</dbReference>
<dbReference type="PROSITE" id="PS01277">
    <property type="entry name" value="RIBONUCLEASE_PH"/>
    <property type="match status" value="1"/>
</dbReference>
<proteinExistence type="inferred from homology"/>
<protein>
    <recommendedName>
        <fullName evidence="1">Ribonuclease PH</fullName>
        <shortName evidence="1">RNase PH</shortName>
        <ecNumber evidence="1">2.7.7.56</ecNumber>
    </recommendedName>
    <alternativeName>
        <fullName evidence="1">tRNA nucleotidyltransferase</fullName>
    </alternativeName>
</protein>
<gene>
    <name evidence="1" type="primary">rph</name>
    <name type="ordered locus">lmo1238</name>
</gene>
<sequence length="248" mass="26670">MRVDGRESNALRNIEVTPDYLMHPEGSVLIASGNTKVICSASVETKVPPFMRGEGRGWISAEYSMLPRATNTRNIRESSKGKVTGRTMEIQRLIGRALRAVVDLDALGERTIWLDCDVIQADGGTRTASITGAFIAMVMAIAKLDEAVPFAKFPVKDFLAATSVGVLEEGGTVLDLNYVEDSAAQVDMNIIMTGSGAFVELQGTGEEATFSETELAELIALGKKGISELIEIQKETLGDKVTARIKGE</sequence>